<protein>
    <recommendedName>
        <fullName>Granzyme K</fullName>
        <ecNumber>3.4.21.-</ecNumber>
    </recommendedName>
    <alternativeName>
        <fullName>NK-tryptase-2</fullName>
        <shortName>NK-Tryp-2</shortName>
    </alternativeName>
</protein>
<dbReference type="EC" id="3.4.21.-"/>
<dbReference type="EMBL" id="L19694">
    <property type="protein sequence ID" value="AAA42057.1"/>
    <property type="molecule type" value="mRNA"/>
</dbReference>
<dbReference type="PIR" id="I56220">
    <property type="entry name" value="I56220"/>
</dbReference>
<dbReference type="RefSeq" id="NP_058815.1">
    <property type="nucleotide sequence ID" value="NM_017119.2"/>
</dbReference>
<dbReference type="SMR" id="P49864"/>
<dbReference type="BioGRID" id="247846">
    <property type="interactions" value="1"/>
</dbReference>
<dbReference type="FunCoup" id="P49864">
    <property type="interactions" value="138"/>
</dbReference>
<dbReference type="IntAct" id="P49864">
    <property type="interactions" value="1"/>
</dbReference>
<dbReference type="STRING" id="10116.ENSRNOP00000014319"/>
<dbReference type="ChEMBL" id="CHEMBL4557"/>
<dbReference type="MEROPS" id="S01.146"/>
<dbReference type="CarbonylDB" id="P49864"/>
<dbReference type="PhosphoSitePlus" id="P49864"/>
<dbReference type="PaxDb" id="10116-ENSRNOP00000014319"/>
<dbReference type="GeneID" id="29165"/>
<dbReference type="KEGG" id="rno:29165"/>
<dbReference type="AGR" id="RGD:68401"/>
<dbReference type="CTD" id="3003"/>
<dbReference type="RGD" id="68401">
    <property type="gene designation" value="Gzmk"/>
</dbReference>
<dbReference type="eggNOG" id="KOG3627">
    <property type="taxonomic scope" value="Eukaryota"/>
</dbReference>
<dbReference type="InParanoid" id="P49864"/>
<dbReference type="OrthoDB" id="49450at9989"/>
<dbReference type="PhylomeDB" id="P49864"/>
<dbReference type="BRENDA" id="3.4.21.B4">
    <property type="organism ID" value="5301"/>
</dbReference>
<dbReference type="PRO" id="PR:P49864"/>
<dbReference type="Proteomes" id="UP000002494">
    <property type="component" value="Unplaced"/>
</dbReference>
<dbReference type="GO" id="GO:0005615">
    <property type="term" value="C:extracellular space"/>
    <property type="evidence" value="ECO:0000318"/>
    <property type="project" value="GO_Central"/>
</dbReference>
<dbReference type="GO" id="GO:0004252">
    <property type="term" value="F:serine-type endopeptidase activity"/>
    <property type="evidence" value="ECO:0000266"/>
    <property type="project" value="RGD"/>
</dbReference>
<dbReference type="GO" id="GO:0008236">
    <property type="term" value="F:serine-type peptidase activity"/>
    <property type="evidence" value="ECO:0000314"/>
    <property type="project" value="RGD"/>
</dbReference>
<dbReference type="GO" id="GO:0140507">
    <property type="term" value="P:granzyme-mediated programmed cell death signaling pathway"/>
    <property type="evidence" value="ECO:0000318"/>
    <property type="project" value="GO_Central"/>
</dbReference>
<dbReference type="GO" id="GO:0051604">
    <property type="term" value="P:protein maturation"/>
    <property type="evidence" value="ECO:0000318"/>
    <property type="project" value="GO_Central"/>
</dbReference>
<dbReference type="GO" id="GO:0006508">
    <property type="term" value="P:proteolysis"/>
    <property type="evidence" value="ECO:0007669"/>
    <property type="project" value="UniProtKB-KW"/>
</dbReference>
<dbReference type="CDD" id="cd00190">
    <property type="entry name" value="Tryp_SPc"/>
    <property type="match status" value="1"/>
</dbReference>
<dbReference type="FunFam" id="2.40.10.10:FF:000003">
    <property type="entry name" value="Transmembrane serine protease 3"/>
    <property type="match status" value="1"/>
</dbReference>
<dbReference type="Gene3D" id="2.40.10.10">
    <property type="entry name" value="Trypsin-like serine proteases"/>
    <property type="match status" value="2"/>
</dbReference>
<dbReference type="InterPro" id="IPR009003">
    <property type="entry name" value="Peptidase_S1_PA"/>
</dbReference>
<dbReference type="InterPro" id="IPR043504">
    <property type="entry name" value="Peptidase_S1_PA_chymotrypsin"/>
</dbReference>
<dbReference type="InterPro" id="IPR001314">
    <property type="entry name" value="Peptidase_S1A"/>
</dbReference>
<dbReference type="InterPro" id="IPR001254">
    <property type="entry name" value="Trypsin_dom"/>
</dbReference>
<dbReference type="InterPro" id="IPR018114">
    <property type="entry name" value="TRYPSIN_HIS"/>
</dbReference>
<dbReference type="InterPro" id="IPR033116">
    <property type="entry name" value="TRYPSIN_SER"/>
</dbReference>
<dbReference type="PANTHER" id="PTHR24271:SF52">
    <property type="entry name" value="GRANZYME K"/>
    <property type="match status" value="1"/>
</dbReference>
<dbReference type="PANTHER" id="PTHR24271">
    <property type="entry name" value="KALLIKREIN-RELATED"/>
    <property type="match status" value="1"/>
</dbReference>
<dbReference type="Pfam" id="PF00089">
    <property type="entry name" value="Trypsin"/>
    <property type="match status" value="1"/>
</dbReference>
<dbReference type="PRINTS" id="PR00722">
    <property type="entry name" value="CHYMOTRYPSIN"/>
</dbReference>
<dbReference type="SMART" id="SM00020">
    <property type="entry name" value="Tryp_SPc"/>
    <property type="match status" value="1"/>
</dbReference>
<dbReference type="SUPFAM" id="SSF50494">
    <property type="entry name" value="Trypsin-like serine proteases"/>
    <property type="match status" value="1"/>
</dbReference>
<dbReference type="PROSITE" id="PS50240">
    <property type="entry name" value="TRYPSIN_DOM"/>
    <property type="match status" value="1"/>
</dbReference>
<dbReference type="PROSITE" id="PS00134">
    <property type="entry name" value="TRYPSIN_HIS"/>
    <property type="match status" value="1"/>
</dbReference>
<dbReference type="PROSITE" id="PS00135">
    <property type="entry name" value="TRYPSIN_SER"/>
    <property type="match status" value="1"/>
</dbReference>
<keyword id="KW-0903">Direct protein sequencing</keyword>
<keyword id="KW-1015">Disulfide bond</keyword>
<keyword id="KW-0378">Hydrolase</keyword>
<keyword id="KW-0645">Protease</keyword>
<keyword id="KW-1185">Reference proteome</keyword>
<keyword id="KW-0720">Serine protease</keyword>
<keyword id="KW-0732">Signal</keyword>
<keyword id="KW-0865">Zymogen</keyword>
<reference key="1">
    <citation type="journal article" date="1994" name="J. Immunol.">
        <title>Purification and cloning of a novel serine protease, RNK-Tryp-2, from the granules of a rat NK cell leukemia.</title>
        <authorList>
            <person name="Sayers T.J."/>
            <person name="Wiltrout T.A."/>
            <person name="Smyth M.J."/>
            <person name="Ottaway K.S."/>
            <person name="Pilaro A.M."/>
            <person name="Sowder R."/>
            <person name="Henderson L.E."/>
            <person name="Sprenger H."/>
            <person name="Lloyd A.R."/>
        </authorList>
    </citation>
    <scope>NUCLEOTIDE SEQUENCE [MRNA]</scope>
    <scope>PROTEIN SEQUENCE OF 26-58</scope>
    <source>
        <strain>Fischer 344</strain>
        <tissue>Lymphocyte</tissue>
    </source>
</reference>
<feature type="signal peptide" evidence="2">
    <location>
        <begin position="1"/>
        <end position="23"/>
    </location>
</feature>
<feature type="propeptide" id="PRO_0000027419" description="Activation peptide" evidence="4">
    <location>
        <begin position="24"/>
        <end position="25"/>
    </location>
</feature>
<feature type="chain" id="PRO_0000027420" description="Granzyme K">
    <location>
        <begin position="26"/>
        <end position="258"/>
    </location>
</feature>
<feature type="domain" description="Peptidase S1" evidence="3">
    <location>
        <begin position="26"/>
        <end position="253"/>
    </location>
</feature>
<feature type="active site" description="Charge relay system" evidence="1">
    <location>
        <position position="66"/>
    </location>
</feature>
<feature type="active site" description="Charge relay system" evidence="1">
    <location>
        <position position="110"/>
    </location>
</feature>
<feature type="active site" description="Charge relay system" evidence="1">
    <location>
        <position position="208"/>
    </location>
</feature>
<feature type="disulfide bond" evidence="3">
    <location>
        <begin position="51"/>
        <end position="67"/>
    </location>
</feature>
<feature type="disulfide bond" evidence="3">
    <location>
        <begin position="143"/>
        <end position="214"/>
    </location>
</feature>
<feature type="disulfide bond" evidence="3">
    <location>
        <begin position="175"/>
        <end position="193"/>
    </location>
</feature>
<feature type="disulfide bond" evidence="3">
    <location>
        <begin position="204"/>
        <end position="228"/>
    </location>
</feature>
<comment type="subcellular location">
    <subcellularLocation>
        <location>Cytoplasmic granule</location>
    </subcellularLocation>
</comment>
<comment type="tissue specificity">
    <text>Speen, lungs and liver non-parenchymal cells.</text>
</comment>
<comment type="similarity">
    <text evidence="3">Belongs to the peptidase S1 family. Granzyme subfamily.</text>
</comment>
<organism>
    <name type="scientific">Rattus norvegicus</name>
    <name type="common">Rat</name>
    <dbReference type="NCBI Taxonomy" id="10116"/>
    <lineage>
        <taxon>Eukaryota</taxon>
        <taxon>Metazoa</taxon>
        <taxon>Chordata</taxon>
        <taxon>Craniata</taxon>
        <taxon>Vertebrata</taxon>
        <taxon>Euteleostomi</taxon>
        <taxon>Mammalia</taxon>
        <taxon>Eutheria</taxon>
        <taxon>Euarchontoglires</taxon>
        <taxon>Glires</taxon>
        <taxon>Rodentia</taxon>
        <taxon>Myomorpha</taxon>
        <taxon>Muroidea</taxon>
        <taxon>Muridae</taxon>
        <taxon>Murinae</taxon>
        <taxon>Rattus</taxon>
    </lineage>
</organism>
<name>GRAK_RAT</name>
<proteinExistence type="evidence at protein level"/>
<evidence type="ECO:0000250" key="1"/>
<evidence type="ECO:0000255" key="2"/>
<evidence type="ECO:0000255" key="3">
    <source>
        <dbReference type="PROSITE-ProRule" id="PRU00274"/>
    </source>
</evidence>
<evidence type="ECO:0000269" key="4">
    <source>
    </source>
</evidence>
<accession>P49864</accession>
<gene>
    <name type="primary">Gzmk</name>
</gene>
<sequence>MSFSSSALVFLVAGIYMSSESFHTEIIGGREVQPHSRPFMASIQYRGKHICGGVLIHPQWVLTAAHCYSRGHSPTVVLGAHSLSKNEPMKQTFEIKEFIPFSGFKSGTNDIMLIKLRTAAELNKHVQLLHLRSKNYIRDGTKCQVTGWGSTKPDVLTTSDTLQEVTVTIISRKRCNSQSYYNHKPVITKDMICAGDRRGEKDSCKGDSGGPLICKGVFHALVSGGYKCGISNKPGVYTLLTKKYQTWIKSKLAPSSAH</sequence>